<organism>
    <name type="scientific">Bacillus cereus (strain G9842)</name>
    <dbReference type="NCBI Taxonomy" id="405531"/>
    <lineage>
        <taxon>Bacteria</taxon>
        <taxon>Bacillati</taxon>
        <taxon>Bacillota</taxon>
        <taxon>Bacilli</taxon>
        <taxon>Bacillales</taxon>
        <taxon>Bacillaceae</taxon>
        <taxon>Bacillus</taxon>
        <taxon>Bacillus cereus group</taxon>
    </lineage>
</organism>
<feature type="chain" id="PRO_1000119898" description="Exodeoxyribonuclease 7 small subunit">
    <location>
        <begin position="1"/>
        <end position="76"/>
    </location>
</feature>
<gene>
    <name evidence="1" type="primary">xseB</name>
    <name type="ordered locus">BCG9842_B0945</name>
</gene>
<protein>
    <recommendedName>
        <fullName evidence="1">Exodeoxyribonuclease 7 small subunit</fullName>
        <ecNumber evidence="1">3.1.11.6</ecNumber>
    </recommendedName>
    <alternativeName>
        <fullName evidence="1">Exodeoxyribonuclease VII small subunit</fullName>
        <shortName evidence="1">Exonuclease VII small subunit</shortName>
    </alternativeName>
</protein>
<accession>B7IXH0</accession>
<sequence length="76" mass="8502">MENKLSFEEAISQLEHLVSKLEQGDVPLEEAISYFKEGMELSKLCDEKLKNVQEQMAVILGEDGELEPFTAVGDEA</sequence>
<dbReference type="EC" id="3.1.11.6" evidence="1"/>
<dbReference type="EMBL" id="CP001186">
    <property type="protein sequence ID" value="ACK96106.1"/>
    <property type="molecule type" value="Genomic_DNA"/>
</dbReference>
<dbReference type="RefSeq" id="WP_000428424.1">
    <property type="nucleotide sequence ID" value="NC_011772.1"/>
</dbReference>
<dbReference type="SMR" id="B7IXH0"/>
<dbReference type="KEGG" id="bcg:BCG9842_B0945"/>
<dbReference type="HOGENOM" id="CLU_145918_3_1_9"/>
<dbReference type="Proteomes" id="UP000006744">
    <property type="component" value="Chromosome"/>
</dbReference>
<dbReference type="GO" id="GO:0005829">
    <property type="term" value="C:cytosol"/>
    <property type="evidence" value="ECO:0007669"/>
    <property type="project" value="TreeGrafter"/>
</dbReference>
<dbReference type="GO" id="GO:0009318">
    <property type="term" value="C:exodeoxyribonuclease VII complex"/>
    <property type="evidence" value="ECO:0007669"/>
    <property type="project" value="InterPro"/>
</dbReference>
<dbReference type="GO" id="GO:0008855">
    <property type="term" value="F:exodeoxyribonuclease VII activity"/>
    <property type="evidence" value="ECO:0007669"/>
    <property type="project" value="UniProtKB-UniRule"/>
</dbReference>
<dbReference type="GO" id="GO:0006308">
    <property type="term" value="P:DNA catabolic process"/>
    <property type="evidence" value="ECO:0007669"/>
    <property type="project" value="UniProtKB-UniRule"/>
</dbReference>
<dbReference type="FunFam" id="1.10.287.1040:FF:000002">
    <property type="entry name" value="Exodeoxyribonuclease 7 small subunit"/>
    <property type="match status" value="1"/>
</dbReference>
<dbReference type="Gene3D" id="1.10.287.1040">
    <property type="entry name" value="Exonuclease VII, small subunit"/>
    <property type="match status" value="1"/>
</dbReference>
<dbReference type="HAMAP" id="MF_00337">
    <property type="entry name" value="Exonuc_7_S"/>
    <property type="match status" value="1"/>
</dbReference>
<dbReference type="InterPro" id="IPR003761">
    <property type="entry name" value="Exonuc_VII_S"/>
</dbReference>
<dbReference type="InterPro" id="IPR037004">
    <property type="entry name" value="Exonuc_VII_ssu_sf"/>
</dbReference>
<dbReference type="NCBIfam" id="NF010666">
    <property type="entry name" value="PRK14063.1"/>
    <property type="match status" value="1"/>
</dbReference>
<dbReference type="NCBIfam" id="TIGR01280">
    <property type="entry name" value="xseB"/>
    <property type="match status" value="1"/>
</dbReference>
<dbReference type="PANTHER" id="PTHR34137">
    <property type="entry name" value="EXODEOXYRIBONUCLEASE 7 SMALL SUBUNIT"/>
    <property type="match status" value="1"/>
</dbReference>
<dbReference type="PANTHER" id="PTHR34137:SF1">
    <property type="entry name" value="EXODEOXYRIBONUCLEASE 7 SMALL SUBUNIT"/>
    <property type="match status" value="1"/>
</dbReference>
<dbReference type="Pfam" id="PF02609">
    <property type="entry name" value="Exonuc_VII_S"/>
    <property type="match status" value="1"/>
</dbReference>
<dbReference type="PIRSF" id="PIRSF006488">
    <property type="entry name" value="Exonuc_VII_S"/>
    <property type="match status" value="1"/>
</dbReference>
<dbReference type="SUPFAM" id="SSF116842">
    <property type="entry name" value="XseB-like"/>
    <property type="match status" value="1"/>
</dbReference>
<proteinExistence type="inferred from homology"/>
<comment type="function">
    <text evidence="1">Bidirectionally degrades single-stranded DNA into large acid-insoluble oligonucleotides, which are then degraded further into small acid-soluble oligonucleotides.</text>
</comment>
<comment type="catalytic activity">
    <reaction evidence="1">
        <text>Exonucleolytic cleavage in either 5'- to 3'- or 3'- to 5'-direction to yield nucleoside 5'-phosphates.</text>
        <dbReference type="EC" id="3.1.11.6"/>
    </reaction>
</comment>
<comment type="subunit">
    <text evidence="1">Heterooligomer composed of large and small subunits.</text>
</comment>
<comment type="subcellular location">
    <subcellularLocation>
        <location evidence="1">Cytoplasm</location>
    </subcellularLocation>
</comment>
<comment type="similarity">
    <text evidence="1">Belongs to the XseB family.</text>
</comment>
<evidence type="ECO:0000255" key="1">
    <source>
        <dbReference type="HAMAP-Rule" id="MF_00337"/>
    </source>
</evidence>
<reference key="1">
    <citation type="submission" date="2008-10" db="EMBL/GenBank/DDBJ databases">
        <title>Genome sequence of Bacillus cereus G9842.</title>
        <authorList>
            <person name="Dodson R.J."/>
            <person name="Durkin A.S."/>
            <person name="Rosovitz M.J."/>
            <person name="Rasko D.A."/>
            <person name="Hoffmaster A."/>
            <person name="Ravel J."/>
            <person name="Sutton G."/>
        </authorList>
    </citation>
    <scope>NUCLEOTIDE SEQUENCE [LARGE SCALE GENOMIC DNA]</scope>
    <source>
        <strain>G9842</strain>
    </source>
</reference>
<name>EX7S_BACC2</name>
<keyword id="KW-0963">Cytoplasm</keyword>
<keyword id="KW-0269">Exonuclease</keyword>
<keyword id="KW-0378">Hydrolase</keyword>
<keyword id="KW-0540">Nuclease</keyword>